<reference key="1">
    <citation type="journal article" date="2005" name="Proc. Natl. Acad. Sci. U.S.A.">
        <title>Comparison of the complete genome sequences of Pseudomonas syringae pv. syringae B728a and pv. tomato DC3000.</title>
        <authorList>
            <person name="Feil H."/>
            <person name="Feil W.S."/>
            <person name="Chain P."/>
            <person name="Larimer F."/>
            <person name="Dibartolo G."/>
            <person name="Copeland A."/>
            <person name="Lykidis A."/>
            <person name="Trong S."/>
            <person name="Nolan M."/>
            <person name="Goltsman E."/>
            <person name="Thiel J."/>
            <person name="Malfatti S."/>
            <person name="Loper J.E."/>
            <person name="Lapidus A."/>
            <person name="Detter J.C."/>
            <person name="Land M."/>
            <person name="Richardson P.M."/>
            <person name="Kyrpides N.C."/>
            <person name="Ivanova N."/>
            <person name="Lindow S.E."/>
        </authorList>
    </citation>
    <scope>NUCLEOTIDE SEQUENCE [LARGE SCALE GENOMIC DNA]</scope>
    <source>
        <strain>B728a</strain>
    </source>
</reference>
<feature type="chain" id="PRO_0000374954" description="Ribosomal protein uS12 methylthiotransferase RimO">
    <location>
        <begin position="1"/>
        <end position="447"/>
    </location>
</feature>
<feature type="domain" description="MTTase N-terminal" evidence="1">
    <location>
        <begin position="10"/>
        <end position="120"/>
    </location>
</feature>
<feature type="domain" description="Radical SAM core" evidence="2">
    <location>
        <begin position="139"/>
        <end position="377"/>
    </location>
</feature>
<feature type="domain" description="TRAM" evidence="1">
    <location>
        <begin position="380"/>
        <end position="447"/>
    </location>
</feature>
<feature type="binding site" evidence="1">
    <location>
        <position position="19"/>
    </location>
    <ligand>
        <name>[4Fe-4S] cluster</name>
        <dbReference type="ChEBI" id="CHEBI:49883"/>
        <label>1</label>
    </ligand>
</feature>
<feature type="binding site" evidence="1">
    <location>
        <position position="55"/>
    </location>
    <ligand>
        <name>[4Fe-4S] cluster</name>
        <dbReference type="ChEBI" id="CHEBI:49883"/>
        <label>1</label>
    </ligand>
</feature>
<feature type="binding site" evidence="1">
    <location>
        <position position="84"/>
    </location>
    <ligand>
        <name>[4Fe-4S] cluster</name>
        <dbReference type="ChEBI" id="CHEBI:49883"/>
        <label>1</label>
    </ligand>
</feature>
<feature type="binding site" evidence="1">
    <location>
        <position position="153"/>
    </location>
    <ligand>
        <name>[4Fe-4S] cluster</name>
        <dbReference type="ChEBI" id="CHEBI:49883"/>
        <label>2</label>
        <note>4Fe-4S-S-AdoMet</note>
    </ligand>
</feature>
<feature type="binding site" evidence="1">
    <location>
        <position position="157"/>
    </location>
    <ligand>
        <name>[4Fe-4S] cluster</name>
        <dbReference type="ChEBI" id="CHEBI:49883"/>
        <label>2</label>
        <note>4Fe-4S-S-AdoMet</note>
    </ligand>
</feature>
<feature type="binding site" evidence="1">
    <location>
        <position position="160"/>
    </location>
    <ligand>
        <name>[4Fe-4S] cluster</name>
        <dbReference type="ChEBI" id="CHEBI:49883"/>
        <label>2</label>
        <note>4Fe-4S-S-AdoMet</note>
    </ligand>
</feature>
<comment type="function">
    <text evidence="1">Catalyzes the methylthiolation of an aspartic acid residue of ribosomal protein uS12.</text>
</comment>
<comment type="catalytic activity">
    <reaction evidence="1">
        <text>L-aspartate(89)-[ribosomal protein uS12]-hydrogen + (sulfur carrier)-SH + AH2 + 2 S-adenosyl-L-methionine = 3-methylsulfanyl-L-aspartate(89)-[ribosomal protein uS12]-hydrogen + (sulfur carrier)-H + 5'-deoxyadenosine + L-methionine + A + S-adenosyl-L-homocysteine + 2 H(+)</text>
        <dbReference type="Rhea" id="RHEA:37087"/>
        <dbReference type="Rhea" id="RHEA-COMP:10460"/>
        <dbReference type="Rhea" id="RHEA-COMP:10461"/>
        <dbReference type="Rhea" id="RHEA-COMP:14737"/>
        <dbReference type="Rhea" id="RHEA-COMP:14739"/>
        <dbReference type="ChEBI" id="CHEBI:13193"/>
        <dbReference type="ChEBI" id="CHEBI:15378"/>
        <dbReference type="ChEBI" id="CHEBI:17319"/>
        <dbReference type="ChEBI" id="CHEBI:17499"/>
        <dbReference type="ChEBI" id="CHEBI:29917"/>
        <dbReference type="ChEBI" id="CHEBI:29961"/>
        <dbReference type="ChEBI" id="CHEBI:57844"/>
        <dbReference type="ChEBI" id="CHEBI:57856"/>
        <dbReference type="ChEBI" id="CHEBI:59789"/>
        <dbReference type="ChEBI" id="CHEBI:64428"/>
        <dbReference type="ChEBI" id="CHEBI:73599"/>
        <dbReference type="EC" id="2.8.4.4"/>
    </reaction>
</comment>
<comment type="cofactor">
    <cofactor evidence="1">
        <name>[4Fe-4S] cluster</name>
        <dbReference type="ChEBI" id="CHEBI:49883"/>
    </cofactor>
    <text evidence="1">Binds 2 [4Fe-4S] clusters. One cluster is coordinated with 3 cysteines and an exchangeable S-adenosyl-L-methionine.</text>
</comment>
<comment type="subcellular location">
    <subcellularLocation>
        <location evidence="1">Cytoplasm</location>
    </subcellularLocation>
</comment>
<comment type="similarity">
    <text evidence="1">Belongs to the methylthiotransferase family. RimO subfamily.</text>
</comment>
<gene>
    <name evidence="1" type="primary">rimO</name>
    <name type="ordered locus">Psyr_1392</name>
</gene>
<accession>Q4ZWM9</accession>
<organism>
    <name type="scientific">Pseudomonas syringae pv. syringae (strain B728a)</name>
    <dbReference type="NCBI Taxonomy" id="205918"/>
    <lineage>
        <taxon>Bacteria</taxon>
        <taxon>Pseudomonadati</taxon>
        <taxon>Pseudomonadota</taxon>
        <taxon>Gammaproteobacteria</taxon>
        <taxon>Pseudomonadales</taxon>
        <taxon>Pseudomonadaceae</taxon>
        <taxon>Pseudomonas</taxon>
        <taxon>Pseudomonas syringae</taxon>
    </lineage>
</organism>
<sequence>MSTVTTPSAPKVGFVSLGCPKALVDSERILTQLRMEGYEVVATYEDADVVVVNTCGFIDTAKAESLEVIGEAIKENGKVIVTGCMGVDASVIRNVHPSVLSVTGPQQYEQVVNAVHDVVPPRKDHNPLIDLVPPQGVKLTPRHYAYLKISEGCNHSCSFCIIPSMRGKLVSRPVGDVLDEAKRLVKSGVKELLVISQDTSAYGVDVKYRTGFWDGQPVKTRMTELCQALGSMGVWVRLHYVYPYPHVDELIPLMAAGKILPYLDIPFQHASPKILKLMKRPAFEDKTLARIKNWREQCPDLIIRSTFIVGFPGETEEDFQYLLDWLTEAQLDRVGCFQYSPVEGAPANLLDAAIVPDDVKQDRWDRFMAHQQAISAARLQMKIGKEIEVLIDEVDDRGAVGRCFFDAPEIDGNVFIGLDDGSTVQPGDKIMCRVTDADEYDLWAEML</sequence>
<protein>
    <recommendedName>
        <fullName evidence="1">Ribosomal protein uS12 methylthiotransferase RimO</fullName>
        <shortName evidence="1">uS12 MTTase</shortName>
        <shortName evidence="1">uS12 methylthiotransferase</shortName>
        <ecNumber evidence="1">2.8.4.4</ecNumber>
    </recommendedName>
    <alternativeName>
        <fullName evidence="1">Ribosomal protein uS12 (aspartate-C(3))-methylthiotransferase</fullName>
    </alternativeName>
    <alternativeName>
        <fullName evidence="1">Ribosome maturation factor RimO</fullName>
    </alternativeName>
</protein>
<evidence type="ECO:0000255" key="1">
    <source>
        <dbReference type="HAMAP-Rule" id="MF_01865"/>
    </source>
</evidence>
<evidence type="ECO:0000255" key="2">
    <source>
        <dbReference type="PROSITE-ProRule" id="PRU01266"/>
    </source>
</evidence>
<keyword id="KW-0004">4Fe-4S</keyword>
<keyword id="KW-0963">Cytoplasm</keyword>
<keyword id="KW-0408">Iron</keyword>
<keyword id="KW-0411">Iron-sulfur</keyword>
<keyword id="KW-0479">Metal-binding</keyword>
<keyword id="KW-0949">S-adenosyl-L-methionine</keyword>
<keyword id="KW-0808">Transferase</keyword>
<name>RIMO_PSEU2</name>
<proteinExistence type="inferred from homology"/>
<dbReference type="EC" id="2.8.4.4" evidence="1"/>
<dbReference type="EMBL" id="CP000075">
    <property type="protein sequence ID" value="AAY36443.1"/>
    <property type="molecule type" value="Genomic_DNA"/>
</dbReference>
<dbReference type="RefSeq" id="WP_011266994.1">
    <property type="nucleotide sequence ID" value="NC_007005.1"/>
</dbReference>
<dbReference type="RefSeq" id="YP_234481.1">
    <property type="nucleotide sequence ID" value="NC_007005.1"/>
</dbReference>
<dbReference type="SMR" id="Q4ZWM9"/>
<dbReference type="STRING" id="205918.Psyr_1392"/>
<dbReference type="KEGG" id="psb:Psyr_1392"/>
<dbReference type="PATRIC" id="fig|205918.7.peg.1426"/>
<dbReference type="eggNOG" id="COG0621">
    <property type="taxonomic scope" value="Bacteria"/>
</dbReference>
<dbReference type="HOGENOM" id="CLU_018697_0_0_6"/>
<dbReference type="OrthoDB" id="9805215at2"/>
<dbReference type="Proteomes" id="UP000000426">
    <property type="component" value="Chromosome"/>
</dbReference>
<dbReference type="GO" id="GO:0005829">
    <property type="term" value="C:cytosol"/>
    <property type="evidence" value="ECO:0007669"/>
    <property type="project" value="TreeGrafter"/>
</dbReference>
<dbReference type="GO" id="GO:0051539">
    <property type="term" value="F:4 iron, 4 sulfur cluster binding"/>
    <property type="evidence" value="ECO:0007669"/>
    <property type="project" value="UniProtKB-UniRule"/>
</dbReference>
<dbReference type="GO" id="GO:0035599">
    <property type="term" value="F:aspartic acid methylthiotransferase activity"/>
    <property type="evidence" value="ECO:0007669"/>
    <property type="project" value="TreeGrafter"/>
</dbReference>
<dbReference type="GO" id="GO:0046872">
    <property type="term" value="F:metal ion binding"/>
    <property type="evidence" value="ECO:0007669"/>
    <property type="project" value="UniProtKB-KW"/>
</dbReference>
<dbReference type="GO" id="GO:0103039">
    <property type="term" value="F:protein methylthiotransferase activity"/>
    <property type="evidence" value="ECO:0007669"/>
    <property type="project" value="UniProtKB-EC"/>
</dbReference>
<dbReference type="GO" id="GO:0006400">
    <property type="term" value="P:tRNA modification"/>
    <property type="evidence" value="ECO:0007669"/>
    <property type="project" value="InterPro"/>
</dbReference>
<dbReference type="CDD" id="cd01335">
    <property type="entry name" value="Radical_SAM"/>
    <property type="match status" value="1"/>
</dbReference>
<dbReference type="FunFam" id="2.40.50.140:FF:000060">
    <property type="entry name" value="Ribosomal protein S12 methylthiotransferase RimO"/>
    <property type="match status" value="1"/>
</dbReference>
<dbReference type="FunFam" id="3.40.50.12160:FF:000002">
    <property type="entry name" value="Ribosomal protein S12 methylthiotransferase RimO"/>
    <property type="match status" value="1"/>
</dbReference>
<dbReference type="FunFam" id="3.80.30.20:FF:000001">
    <property type="entry name" value="tRNA-2-methylthio-N(6)-dimethylallyladenosine synthase 2"/>
    <property type="match status" value="1"/>
</dbReference>
<dbReference type="Gene3D" id="3.40.50.12160">
    <property type="entry name" value="Methylthiotransferase, N-terminal domain"/>
    <property type="match status" value="1"/>
</dbReference>
<dbReference type="Gene3D" id="2.40.50.140">
    <property type="entry name" value="Nucleic acid-binding proteins"/>
    <property type="match status" value="1"/>
</dbReference>
<dbReference type="Gene3D" id="3.80.30.20">
    <property type="entry name" value="tm_1862 like domain"/>
    <property type="match status" value="1"/>
</dbReference>
<dbReference type="HAMAP" id="MF_01865">
    <property type="entry name" value="MTTase_RimO"/>
    <property type="match status" value="1"/>
</dbReference>
<dbReference type="InterPro" id="IPR006638">
    <property type="entry name" value="Elp3/MiaA/NifB-like_rSAM"/>
</dbReference>
<dbReference type="InterPro" id="IPR005839">
    <property type="entry name" value="Methylthiotransferase"/>
</dbReference>
<dbReference type="InterPro" id="IPR020612">
    <property type="entry name" value="Methylthiotransferase_CS"/>
</dbReference>
<dbReference type="InterPro" id="IPR013848">
    <property type="entry name" value="Methylthiotransferase_N"/>
</dbReference>
<dbReference type="InterPro" id="IPR038135">
    <property type="entry name" value="Methylthiotransferase_N_sf"/>
</dbReference>
<dbReference type="InterPro" id="IPR012340">
    <property type="entry name" value="NA-bd_OB-fold"/>
</dbReference>
<dbReference type="InterPro" id="IPR005840">
    <property type="entry name" value="Ribosomal_uS12_MeSTrfase_RimO"/>
</dbReference>
<dbReference type="InterPro" id="IPR007197">
    <property type="entry name" value="rSAM"/>
</dbReference>
<dbReference type="InterPro" id="IPR023404">
    <property type="entry name" value="rSAM_horseshoe"/>
</dbReference>
<dbReference type="InterPro" id="IPR002792">
    <property type="entry name" value="TRAM_dom"/>
</dbReference>
<dbReference type="NCBIfam" id="TIGR01125">
    <property type="entry name" value="30S ribosomal protein S12 methylthiotransferase RimO"/>
    <property type="match status" value="1"/>
</dbReference>
<dbReference type="NCBIfam" id="TIGR00089">
    <property type="entry name" value="MiaB/RimO family radical SAM methylthiotransferase"/>
    <property type="match status" value="1"/>
</dbReference>
<dbReference type="PANTHER" id="PTHR43837">
    <property type="entry name" value="RIBOSOMAL PROTEIN S12 METHYLTHIOTRANSFERASE RIMO"/>
    <property type="match status" value="1"/>
</dbReference>
<dbReference type="PANTHER" id="PTHR43837:SF1">
    <property type="entry name" value="RIBOSOMAL PROTEIN US12 METHYLTHIOTRANSFERASE RIMO"/>
    <property type="match status" value="1"/>
</dbReference>
<dbReference type="Pfam" id="PF04055">
    <property type="entry name" value="Radical_SAM"/>
    <property type="match status" value="1"/>
</dbReference>
<dbReference type="Pfam" id="PF18693">
    <property type="entry name" value="TRAM_2"/>
    <property type="match status" value="1"/>
</dbReference>
<dbReference type="Pfam" id="PF00919">
    <property type="entry name" value="UPF0004"/>
    <property type="match status" value="1"/>
</dbReference>
<dbReference type="SFLD" id="SFLDG01082">
    <property type="entry name" value="B12-binding_domain_containing"/>
    <property type="match status" value="1"/>
</dbReference>
<dbReference type="SFLD" id="SFLDG01061">
    <property type="entry name" value="methylthiotransferase"/>
    <property type="match status" value="1"/>
</dbReference>
<dbReference type="SFLD" id="SFLDF00274">
    <property type="entry name" value="ribosomal_protein_S12_methylth"/>
    <property type="match status" value="1"/>
</dbReference>
<dbReference type="SMART" id="SM00729">
    <property type="entry name" value="Elp3"/>
    <property type="match status" value="1"/>
</dbReference>
<dbReference type="SUPFAM" id="SSF102114">
    <property type="entry name" value="Radical SAM enzymes"/>
    <property type="match status" value="1"/>
</dbReference>
<dbReference type="PROSITE" id="PS51449">
    <property type="entry name" value="MTTASE_N"/>
    <property type="match status" value="1"/>
</dbReference>
<dbReference type="PROSITE" id="PS01278">
    <property type="entry name" value="MTTASE_RADICAL"/>
    <property type="match status" value="1"/>
</dbReference>
<dbReference type="PROSITE" id="PS51918">
    <property type="entry name" value="RADICAL_SAM"/>
    <property type="match status" value="1"/>
</dbReference>
<dbReference type="PROSITE" id="PS50926">
    <property type="entry name" value="TRAM"/>
    <property type="match status" value="1"/>
</dbReference>